<organism>
    <name type="scientific">Cricetulus griseus</name>
    <name type="common">Chinese hamster</name>
    <name type="synonym">Cricetulus barabensis griseus</name>
    <dbReference type="NCBI Taxonomy" id="10029"/>
    <lineage>
        <taxon>Eukaryota</taxon>
        <taxon>Metazoa</taxon>
        <taxon>Chordata</taxon>
        <taxon>Craniata</taxon>
        <taxon>Vertebrata</taxon>
        <taxon>Euteleostomi</taxon>
        <taxon>Mammalia</taxon>
        <taxon>Eutheria</taxon>
        <taxon>Euarchontoglires</taxon>
        <taxon>Glires</taxon>
        <taxon>Rodentia</taxon>
        <taxon>Myomorpha</taxon>
        <taxon>Muroidea</taxon>
        <taxon>Cricetidae</taxon>
        <taxon>Cricetinae</taxon>
        <taxon>Cricetulus</taxon>
    </lineage>
</organism>
<feature type="initiator methionine" description="Removed" evidence="2">
    <location>
        <position position="1"/>
    </location>
</feature>
<feature type="chain" id="PRO_0000218758" description="Peroxisomal biogenesis factor 19">
    <location>
        <begin position="2"/>
        <end position="296"/>
    </location>
</feature>
<feature type="propeptide" id="PRO_0000396700" description="Removed in mature form" evidence="7">
    <location>
        <begin position="297"/>
        <end position="299"/>
    </location>
</feature>
<feature type="region of interest" description="Disordered" evidence="5">
    <location>
        <begin position="1"/>
        <end position="63"/>
    </location>
</feature>
<feature type="region of interest" description="Necessary for PEX19 function on peroxisome biogenesis" evidence="1">
    <location>
        <begin position="2"/>
        <end position="91"/>
    </location>
</feature>
<feature type="region of interest" description="Docking to the peroxisome membrane and binding to PEX3" evidence="1">
    <location>
        <begin position="2"/>
        <end position="56"/>
    </location>
</feature>
<feature type="compositionally biased region" description="Acidic residues" evidence="5">
    <location>
        <begin position="16"/>
        <end position="27"/>
    </location>
</feature>
<feature type="modified residue" description="N-acetylalanine" evidence="2">
    <location>
        <position position="2"/>
    </location>
</feature>
<feature type="modified residue" description="Phosphoserine" evidence="2">
    <location>
        <position position="35"/>
    </location>
</feature>
<feature type="modified residue" description="Phosphoserine" evidence="2">
    <location>
        <position position="54"/>
    </location>
</feature>
<feature type="modified residue" description="Phosphoserine" evidence="4">
    <location>
        <position position="66"/>
    </location>
</feature>
<feature type="modified residue" description="Phosphothreonine" evidence="3">
    <location>
        <position position="236"/>
    </location>
</feature>
<feature type="modified residue" description="Cysteine methyl ester" evidence="7">
    <location>
        <position position="296"/>
    </location>
</feature>
<feature type="lipid moiety-binding region" description="S-farnesyl cysteine" evidence="6">
    <location>
        <position position="296"/>
    </location>
</feature>
<comment type="function">
    <text evidence="2">Necessary for early peroxisomal biogenesis. Acts both as a cytosolic chaperone and as an import receptor for peroxisomal membrane proteins (PMPs). Binds and stabilizes newly synthesized PMPs in the cytoplasm by interacting with their hydrophobic membrane-spanning domains, and targets them to the peroxisome membrane by binding to the integral membrane protein PEX3. Excludes CDKN2A from the nucleus and prevents its interaction with MDM2, which results in active degradation of TP53.</text>
</comment>
<comment type="subunit">
    <text evidence="1">Interacts with a broad range of peroxisomal membrane proteins, including PEX3, PEX10, PEX11A, PEX11B, PEX12, PEX13, PEX14 and PEX16, PXMP2/PMP22, PXMP4/PMP24, SLC25A17/PMP34, ABCD1/ALDP, ABCD2/ALDRP, and ABCD3/PMP70. Also interacts with the tumor suppressor CDKN2A/p19ARF (By similarity).</text>
</comment>
<comment type="subcellular location">
    <subcellularLocation>
        <location evidence="2">Cytoplasm</location>
    </subcellularLocation>
    <subcellularLocation>
        <location evidence="6">Peroxisome membrane</location>
        <topology evidence="6">Lipid-anchor</topology>
        <orientation evidence="6">Cytoplasmic side</orientation>
    </subcellularLocation>
    <text evidence="2">Mainly cytoplasmic. Some fraction is membrane-associated to the outer surface of peroxisomes.</text>
</comment>
<comment type="tissue specificity">
    <text evidence="6">Ubiquitous.</text>
</comment>
<comment type="similarity">
    <text evidence="7">Belongs to the peroxin-19 family.</text>
</comment>
<gene>
    <name type="primary">PEX19</name>
    <name type="synonym">PXF</name>
</gene>
<sequence>MAAAEEGCDAGVEADRELEELLESALDDFDKAKPSPAPPPTTSAPDASGPQKKSPGDTAKDALFASQEKFFQELFDSELASQATAEFEKAMKELAEEEPHLVEQFQKLSEAAGRVGSDANSQQEFTSCLKETLSGLAKNATDLQNSGMSEEELTKAMEGLGMDDGDGDGNILPIMQSIMQNLLSKDVLYPSLKEITEKYPEWLQSHQESIPPEQFEKYQEQHSVMGKICEQFEAETPTDSEATHRARFEAVLDLMQQLQDLGHPPKELAGEMPPGLNFDLDTLNLSGPPGANGEQCLIM</sequence>
<accession>Q60415</accession>
<evidence type="ECO:0000250" key="1"/>
<evidence type="ECO:0000250" key="2">
    <source>
        <dbReference type="UniProtKB" id="P40855"/>
    </source>
</evidence>
<evidence type="ECO:0000250" key="3">
    <source>
        <dbReference type="UniProtKB" id="Q8VCI5"/>
    </source>
</evidence>
<evidence type="ECO:0000250" key="4">
    <source>
        <dbReference type="UniProtKB" id="Q9QYU1"/>
    </source>
</evidence>
<evidence type="ECO:0000256" key="5">
    <source>
        <dbReference type="SAM" id="MobiDB-lite"/>
    </source>
</evidence>
<evidence type="ECO:0000269" key="6">
    <source>
    </source>
</evidence>
<evidence type="ECO:0000305" key="7"/>
<proteinExistence type="evidence at protein level"/>
<reference key="1">
    <citation type="journal article" date="1994" name="J. Biol. Chem.">
        <title>PxF, a prenylated protein of peroxisomes.</title>
        <authorList>
            <person name="James G.L."/>
            <person name="Goldstein J.L."/>
            <person name="Pathak R.K."/>
            <person name="Anderson R.G.W."/>
            <person name="Brown M.S."/>
        </authorList>
    </citation>
    <scope>NUCLEOTIDE SEQUENCE [MRNA]</scope>
    <scope>PROTEIN SEQUENCE OF 32-48; 70-88; 93-154; 186-211 AND 228-242</scope>
    <scope>ISOPRENYLATION AT CYS-296</scope>
    <scope>TISSUE SPECIFICITY</scope>
    <scope>SUBCELLULAR LOCATION</scope>
    <source>
        <tissue>Ovarian carcinoma</tissue>
    </source>
</reference>
<dbReference type="EMBL" id="U05959">
    <property type="protein sequence ID" value="AAA20595.1"/>
    <property type="molecule type" value="mRNA"/>
</dbReference>
<dbReference type="PIR" id="A54090">
    <property type="entry name" value="A54090"/>
</dbReference>
<dbReference type="RefSeq" id="NP_001233665.1">
    <property type="nucleotide sequence ID" value="NM_001246736.1"/>
</dbReference>
<dbReference type="SMR" id="Q60415"/>
<dbReference type="PaxDb" id="10029-NP_001233665.1"/>
<dbReference type="Ensembl" id="ENSCGRT00001031567.1">
    <property type="protein sequence ID" value="ENSCGRP00001027320.1"/>
    <property type="gene ID" value="ENSCGRG00001024356.1"/>
</dbReference>
<dbReference type="GeneID" id="100689302"/>
<dbReference type="KEGG" id="cge:100689302"/>
<dbReference type="CTD" id="5824"/>
<dbReference type="eggNOG" id="KOG3133">
    <property type="taxonomic scope" value="Eukaryota"/>
</dbReference>
<dbReference type="GeneTree" id="ENSGT00390000010993"/>
<dbReference type="OMA" id="YEPMKEM"/>
<dbReference type="OrthoDB" id="21292at2759"/>
<dbReference type="Proteomes" id="UP000694386">
    <property type="component" value="Unplaced"/>
</dbReference>
<dbReference type="Proteomes" id="UP001108280">
    <property type="component" value="Chromosome 5"/>
</dbReference>
<dbReference type="GO" id="GO:0005737">
    <property type="term" value="C:cytoplasm"/>
    <property type="evidence" value="ECO:0000250"/>
    <property type="project" value="UniProtKB"/>
</dbReference>
<dbReference type="GO" id="GO:0005829">
    <property type="term" value="C:cytosol"/>
    <property type="evidence" value="ECO:0007669"/>
    <property type="project" value="Ensembl"/>
</dbReference>
<dbReference type="GO" id="GO:0016020">
    <property type="term" value="C:membrane"/>
    <property type="evidence" value="ECO:0000250"/>
    <property type="project" value="UniProtKB"/>
</dbReference>
<dbReference type="GO" id="GO:0005654">
    <property type="term" value="C:nucleoplasm"/>
    <property type="evidence" value="ECO:0007669"/>
    <property type="project" value="Ensembl"/>
</dbReference>
<dbReference type="GO" id="GO:0005634">
    <property type="term" value="C:nucleus"/>
    <property type="evidence" value="ECO:0000250"/>
    <property type="project" value="UniProtKB"/>
</dbReference>
<dbReference type="GO" id="GO:0005778">
    <property type="term" value="C:peroxisomal membrane"/>
    <property type="evidence" value="ECO:0000250"/>
    <property type="project" value="UniProtKB"/>
</dbReference>
<dbReference type="GO" id="GO:0032991">
    <property type="term" value="C:protein-containing complex"/>
    <property type="evidence" value="ECO:0007669"/>
    <property type="project" value="Ensembl"/>
</dbReference>
<dbReference type="GO" id="GO:0051117">
    <property type="term" value="F:ATPase binding"/>
    <property type="evidence" value="ECO:0007669"/>
    <property type="project" value="Ensembl"/>
</dbReference>
<dbReference type="GO" id="GO:0036105">
    <property type="term" value="F:peroxisome membrane class-1 targeting sequence binding"/>
    <property type="evidence" value="ECO:0007669"/>
    <property type="project" value="Ensembl"/>
</dbReference>
<dbReference type="GO" id="GO:0140597">
    <property type="term" value="F:protein carrier chaperone"/>
    <property type="evidence" value="ECO:0007669"/>
    <property type="project" value="Ensembl"/>
</dbReference>
<dbReference type="GO" id="GO:0061077">
    <property type="term" value="P:chaperone-mediated protein folding"/>
    <property type="evidence" value="ECO:0007669"/>
    <property type="project" value="Ensembl"/>
</dbReference>
<dbReference type="GO" id="GO:0016559">
    <property type="term" value="P:peroxisome fission"/>
    <property type="evidence" value="ECO:0007669"/>
    <property type="project" value="Ensembl"/>
</dbReference>
<dbReference type="GO" id="GO:0016557">
    <property type="term" value="P:peroxisome membrane biogenesis"/>
    <property type="evidence" value="ECO:0000250"/>
    <property type="project" value="UniProtKB"/>
</dbReference>
<dbReference type="GO" id="GO:0007031">
    <property type="term" value="P:peroxisome organization"/>
    <property type="evidence" value="ECO:0000250"/>
    <property type="project" value="UniProtKB"/>
</dbReference>
<dbReference type="GO" id="GO:0045046">
    <property type="term" value="P:protein import into peroxisome membrane"/>
    <property type="evidence" value="ECO:0007669"/>
    <property type="project" value="Ensembl"/>
</dbReference>
<dbReference type="GO" id="GO:0050821">
    <property type="term" value="P:protein stabilization"/>
    <property type="evidence" value="ECO:0007669"/>
    <property type="project" value="Ensembl"/>
</dbReference>
<dbReference type="GO" id="GO:0006625">
    <property type="term" value="P:protein targeting to peroxisome"/>
    <property type="evidence" value="ECO:0000250"/>
    <property type="project" value="UniProtKB"/>
</dbReference>
<dbReference type="FunFam" id="1.20.120.900:FF:000001">
    <property type="entry name" value="Putative peroxisomal biogenesis factor 19"/>
    <property type="match status" value="1"/>
</dbReference>
<dbReference type="Gene3D" id="1.20.120.900">
    <property type="entry name" value="Pex19, mPTS binding domain"/>
    <property type="match status" value="1"/>
</dbReference>
<dbReference type="InterPro" id="IPR006708">
    <property type="entry name" value="Pex19"/>
</dbReference>
<dbReference type="InterPro" id="IPR038322">
    <property type="entry name" value="Pex19_C_sf"/>
</dbReference>
<dbReference type="PANTHER" id="PTHR12774">
    <property type="entry name" value="PEROXISOMAL BIOGENESIS FACTOR 19"/>
    <property type="match status" value="1"/>
</dbReference>
<dbReference type="PANTHER" id="PTHR12774:SF2">
    <property type="entry name" value="PEROXISOMAL BIOGENESIS FACTOR 19"/>
    <property type="match status" value="1"/>
</dbReference>
<dbReference type="Pfam" id="PF04614">
    <property type="entry name" value="Pex19"/>
    <property type="match status" value="1"/>
</dbReference>
<protein>
    <recommendedName>
        <fullName>Peroxisomal biogenesis factor 19</fullName>
    </recommendedName>
    <alternativeName>
        <fullName>Peroxin-19</fullName>
    </alternativeName>
    <alternativeName>
        <fullName>Peroxisomal farnesylated protein</fullName>
    </alternativeName>
</protein>
<keyword id="KW-0007">Acetylation</keyword>
<keyword id="KW-0963">Cytoplasm</keyword>
<keyword id="KW-0903">Direct protein sequencing</keyword>
<keyword id="KW-0449">Lipoprotein</keyword>
<keyword id="KW-0472">Membrane</keyword>
<keyword id="KW-0488">Methylation</keyword>
<keyword id="KW-0576">Peroxisome</keyword>
<keyword id="KW-0962">Peroxisome biogenesis</keyword>
<keyword id="KW-0597">Phosphoprotein</keyword>
<keyword id="KW-0636">Prenylation</keyword>
<name>PEX19_CRIGR</name>